<comment type="function">
    <text evidence="1">Required for maturation of urease via the functional incorporation of the urease nickel metallocenter.</text>
</comment>
<comment type="subunit">
    <text evidence="1">UreD, UreF and UreG form a complex that acts as a GTP-hydrolysis-dependent molecular chaperone, activating the urease apoprotein by helping to assemble the nickel containing metallocenter of UreC. The UreE protein probably delivers the nickel.</text>
</comment>
<comment type="subcellular location">
    <subcellularLocation>
        <location evidence="1">Cytoplasm</location>
    </subcellularLocation>
</comment>
<comment type="similarity">
    <text evidence="1">Belongs to the UreD family.</text>
</comment>
<feature type="chain" id="PRO_0000340495" description="Urease accessory protein UreD 2">
    <location>
        <begin position="1"/>
        <end position="281"/>
    </location>
</feature>
<reference key="1">
    <citation type="journal article" date="2003" name="Proc. Natl. Acad. Sci. U.S.A.">
        <title>The complete genome sequence of the Arabidopsis and tomato pathogen Pseudomonas syringae pv. tomato DC3000.</title>
        <authorList>
            <person name="Buell C.R."/>
            <person name="Joardar V."/>
            <person name="Lindeberg M."/>
            <person name="Selengut J."/>
            <person name="Paulsen I.T."/>
            <person name="Gwinn M.L."/>
            <person name="Dodson R.J."/>
            <person name="DeBoy R.T."/>
            <person name="Durkin A.S."/>
            <person name="Kolonay J.F."/>
            <person name="Madupu R."/>
            <person name="Daugherty S.C."/>
            <person name="Brinkac L.M."/>
            <person name="Beanan M.J."/>
            <person name="Haft D.H."/>
            <person name="Nelson W.C."/>
            <person name="Davidsen T.M."/>
            <person name="Zafar N."/>
            <person name="Zhou L."/>
            <person name="Liu J."/>
            <person name="Yuan Q."/>
            <person name="Khouri H.M."/>
            <person name="Fedorova N.B."/>
            <person name="Tran B."/>
            <person name="Russell D."/>
            <person name="Berry K.J."/>
            <person name="Utterback T.R."/>
            <person name="Van Aken S.E."/>
            <person name="Feldblyum T.V."/>
            <person name="D'Ascenzo M."/>
            <person name="Deng W.-L."/>
            <person name="Ramos A.R."/>
            <person name="Alfano J.R."/>
            <person name="Cartinhour S."/>
            <person name="Chatterjee A.K."/>
            <person name="Delaney T.P."/>
            <person name="Lazarowitz S.G."/>
            <person name="Martin G.B."/>
            <person name="Schneider D.J."/>
            <person name="Tang X."/>
            <person name="Bender C.L."/>
            <person name="White O."/>
            <person name="Fraser C.M."/>
            <person name="Collmer A."/>
        </authorList>
    </citation>
    <scope>NUCLEOTIDE SEQUENCE [LARGE SCALE GENOMIC DNA]</scope>
    <source>
        <strain>ATCC BAA-871 / DC3000</strain>
    </source>
</reference>
<gene>
    <name evidence="1" type="primary">ureD2</name>
    <name type="synonym">pspTO4890</name>
    <name type="ordered locus">PSPTO_4890</name>
</gene>
<organism>
    <name type="scientific">Pseudomonas syringae pv. tomato (strain ATCC BAA-871 / DC3000)</name>
    <dbReference type="NCBI Taxonomy" id="223283"/>
    <lineage>
        <taxon>Bacteria</taxon>
        <taxon>Pseudomonadati</taxon>
        <taxon>Pseudomonadota</taxon>
        <taxon>Gammaproteobacteria</taxon>
        <taxon>Pseudomonadales</taxon>
        <taxon>Pseudomonadaceae</taxon>
        <taxon>Pseudomonas</taxon>
    </lineage>
</organism>
<evidence type="ECO:0000255" key="1">
    <source>
        <dbReference type="HAMAP-Rule" id="MF_01384"/>
    </source>
</evidence>
<name>URED2_PSESM</name>
<proteinExistence type="inferred from homology"/>
<sequence>MNLPAHTALFTPSWHAELELGYGRFYDCTRPTQRRHKGPLRVQKHLYAEGPEVCQHIIVHPPGGIAGGDRLDISVNVGAHAWAQLTSPGAAKWYRAASPAFQQLELHVQPGATLEWLPQETIVFSNAQAELTTRIELHGDARLCYWDVVALGRPASGERFEHGHFQSHLDIRRDGTLLWHERQRIIGADGLLDSPIGLDGKTVFATLLLTGDVDSDLLEVCRSLSMPSPVRGNLTQLPGLIVARCLADEALHARAWLIEIWKRLRPALLGREAVMPRIWNT</sequence>
<protein>
    <recommendedName>
        <fullName evidence="1">Urease accessory protein UreD 2</fullName>
    </recommendedName>
</protein>
<keyword id="KW-0143">Chaperone</keyword>
<keyword id="KW-0963">Cytoplasm</keyword>
<keyword id="KW-0996">Nickel insertion</keyword>
<keyword id="KW-1185">Reference proteome</keyword>
<dbReference type="EMBL" id="AE016853">
    <property type="protein sequence ID" value="AAO58319.1"/>
    <property type="molecule type" value="Genomic_DNA"/>
</dbReference>
<dbReference type="RefSeq" id="NP_794624.1">
    <property type="nucleotide sequence ID" value="NC_004578.1"/>
</dbReference>
<dbReference type="RefSeq" id="WP_005763106.1">
    <property type="nucleotide sequence ID" value="NC_004578.1"/>
</dbReference>
<dbReference type="SMR" id="Q87VP5"/>
<dbReference type="STRING" id="223283.PSPTO_4890"/>
<dbReference type="DNASU" id="1186573"/>
<dbReference type="GeneID" id="1186573"/>
<dbReference type="KEGG" id="pst:PSPTO_4890"/>
<dbReference type="PATRIC" id="fig|223283.9.peg.5003"/>
<dbReference type="eggNOG" id="COG0829">
    <property type="taxonomic scope" value="Bacteria"/>
</dbReference>
<dbReference type="HOGENOM" id="CLU_056339_0_0_6"/>
<dbReference type="OrthoDB" id="9798842at2"/>
<dbReference type="PhylomeDB" id="Q87VP5"/>
<dbReference type="Proteomes" id="UP000002515">
    <property type="component" value="Chromosome"/>
</dbReference>
<dbReference type="GO" id="GO:0005737">
    <property type="term" value="C:cytoplasm"/>
    <property type="evidence" value="ECO:0007669"/>
    <property type="project" value="UniProtKB-SubCell"/>
</dbReference>
<dbReference type="GO" id="GO:0016151">
    <property type="term" value="F:nickel cation binding"/>
    <property type="evidence" value="ECO:0007669"/>
    <property type="project" value="UniProtKB-UniRule"/>
</dbReference>
<dbReference type="HAMAP" id="MF_01384">
    <property type="entry name" value="UreD"/>
    <property type="match status" value="1"/>
</dbReference>
<dbReference type="InterPro" id="IPR002669">
    <property type="entry name" value="UreD"/>
</dbReference>
<dbReference type="PANTHER" id="PTHR33643">
    <property type="entry name" value="UREASE ACCESSORY PROTEIN D"/>
    <property type="match status" value="1"/>
</dbReference>
<dbReference type="PANTHER" id="PTHR33643:SF1">
    <property type="entry name" value="UREASE ACCESSORY PROTEIN D"/>
    <property type="match status" value="1"/>
</dbReference>
<dbReference type="Pfam" id="PF01774">
    <property type="entry name" value="UreD"/>
    <property type="match status" value="1"/>
</dbReference>
<accession>Q87VP5</accession>